<gene>
    <name type="primary">clpB</name>
    <name type="ordered locus">WD_0224</name>
</gene>
<dbReference type="EMBL" id="AE017196">
    <property type="protein sequence ID" value="AAS13968.1"/>
    <property type="molecule type" value="Genomic_DNA"/>
</dbReference>
<dbReference type="RefSeq" id="WP_010962444.1">
    <property type="nucleotide sequence ID" value="NZ_OX384529.1"/>
</dbReference>
<dbReference type="SMR" id="Q73IE4"/>
<dbReference type="EnsemblBacteria" id="AAS13968">
    <property type="protein sequence ID" value="AAS13968"/>
    <property type="gene ID" value="WD_0224"/>
</dbReference>
<dbReference type="GeneID" id="70035715"/>
<dbReference type="KEGG" id="wol:WD_0224"/>
<dbReference type="eggNOG" id="COG0542">
    <property type="taxonomic scope" value="Bacteria"/>
</dbReference>
<dbReference type="Proteomes" id="UP000008215">
    <property type="component" value="Chromosome"/>
</dbReference>
<dbReference type="GO" id="GO:0005737">
    <property type="term" value="C:cytoplasm"/>
    <property type="evidence" value="ECO:0007669"/>
    <property type="project" value="UniProtKB-SubCell"/>
</dbReference>
<dbReference type="GO" id="GO:0005524">
    <property type="term" value="F:ATP binding"/>
    <property type="evidence" value="ECO:0007669"/>
    <property type="project" value="UniProtKB-KW"/>
</dbReference>
<dbReference type="GO" id="GO:0016887">
    <property type="term" value="F:ATP hydrolysis activity"/>
    <property type="evidence" value="ECO:0007669"/>
    <property type="project" value="InterPro"/>
</dbReference>
<dbReference type="GO" id="GO:0034605">
    <property type="term" value="P:cellular response to heat"/>
    <property type="evidence" value="ECO:0007669"/>
    <property type="project" value="TreeGrafter"/>
</dbReference>
<dbReference type="GO" id="GO:0042026">
    <property type="term" value="P:protein refolding"/>
    <property type="evidence" value="ECO:0007669"/>
    <property type="project" value="InterPro"/>
</dbReference>
<dbReference type="CDD" id="cd00009">
    <property type="entry name" value="AAA"/>
    <property type="match status" value="1"/>
</dbReference>
<dbReference type="CDD" id="cd19499">
    <property type="entry name" value="RecA-like_ClpB_Hsp104-like"/>
    <property type="match status" value="1"/>
</dbReference>
<dbReference type="FunFam" id="3.40.50.300:FF:000120">
    <property type="entry name" value="ATP-dependent chaperone ClpB"/>
    <property type="match status" value="1"/>
</dbReference>
<dbReference type="FunFam" id="3.40.50.300:FF:000025">
    <property type="entry name" value="ATP-dependent Clp protease subunit"/>
    <property type="match status" value="1"/>
</dbReference>
<dbReference type="FunFam" id="3.40.50.300:FF:000010">
    <property type="entry name" value="Chaperone clpB 1, putative"/>
    <property type="match status" value="1"/>
</dbReference>
<dbReference type="Gene3D" id="1.10.8.60">
    <property type="match status" value="1"/>
</dbReference>
<dbReference type="Gene3D" id="1.10.1780.10">
    <property type="entry name" value="Clp, N-terminal domain"/>
    <property type="match status" value="1"/>
</dbReference>
<dbReference type="Gene3D" id="3.40.50.300">
    <property type="entry name" value="P-loop containing nucleotide triphosphate hydrolases"/>
    <property type="match status" value="3"/>
</dbReference>
<dbReference type="InterPro" id="IPR003593">
    <property type="entry name" value="AAA+_ATPase"/>
</dbReference>
<dbReference type="InterPro" id="IPR003959">
    <property type="entry name" value="ATPase_AAA_core"/>
</dbReference>
<dbReference type="InterPro" id="IPR017730">
    <property type="entry name" value="Chaperonin_ClpB"/>
</dbReference>
<dbReference type="InterPro" id="IPR019489">
    <property type="entry name" value="Clp_ATPase_C"/>
</dbReference>
<dbReference type="InterPro" id="IPR036628">
    <property type="entry name" value="Clp_N_dom_sf"/>
</dbReference>
<dbReference type="InterPro" id="IPR004176">
    <property type="entry name" value="Clp_R_dom"/>
</dbReference>
<dbReference type="InterPro" id="IPR001270">
    <property type="entry name" value="ClpA/B"/>
</dbReference>
<dbReference type="InterPro" id="IPR018368">
    <property type="entry name" value="ClpA/B_CS1"/>
</dbReference>
<dbReference type="InterPro" id="IPR028299">
    <property type="entry name" value="ClpA/B_CS2"/>
</dbReference>
<dbReference type="InterPro" id="IPR041546">
    <property type="entry name" value="ClpA/ClpB_AAA_lid"/>
</dbReference>
<dbReference type="InterPro" id="IPR050130">
    <property type="entry name" value="ClpA_ClpB"/>
</dbReference>
<dbReference type="InterPro" id="IPR027417">
    <property type="entry name" value="P-loop_NTPase"/>
</dbReference>
<dbReference type="NCBIfam" id="TIGR03346">
    <property type="entry name" value="chaperone_ClpB"/>
    <property type="match status" value="1"/>
</dbReference>
<dbReference type="PANTHER" id="PTHR11638">
    <property type="entry name" value="ATP-DEPENDENT CLP PROTEASE"/>
    <property type="match status" value="1"/>
</dbReference>
<dbReference type="PANTHER" id="PTHR11638:SF18">
    <property type="entry name" value="HEAT SHOCK PROTEIN 104"/>
    <property type="match status" value="1"/>
</dbReference>
<dbReference type="Pfam" id="PF00004">
    <property type="entry name" value="AAA"/>
    <property type="match status" value="1"/>
</dbReference>
<dbReference type="Pfam" id="PF07724">
    <property type="entry name" value="AAA_2"/>
    <property type="match status" value="1"/>
</dbReference>
<dbReference type="Pfam" id="PF17871">
    <property type="entry name" value="AAA_lid_9"/>
    <property type="match status" value="1"/>
</dbReference>
<dbReference type="Pfam" id="PF02861">
    <property type="entry name" value="Clp_N"/>
    <property type="match status" value="2"/>
</dbReference>
<dbReference type="Pfam" id="PF10431">
    <property type="entry name" value="ClpB_D2-small"/>
    <property type="match status" value="1"/>
</dbReference>
<dbReference type="PRINTS" id="PR00300">
    <property type="entry name" value="CLPPROTEASEA"/>
</dbReference>
<dbReference type="SMART" id="SM00382">
    <property type="entry name" value="AAA"/>
    <property type="match status" value="2"/>
</dbReference>
<dbReference type="SMART" id="SM01086">
    <property type="entry name" value="ClpB_D2-small"/>
    <property type="match status" value="1"/>
</dbReference>
<dbReference type="SUPFAM" id="SSF81923">
    <property type="entry name" value="Double Clp-N motif"/>
    <property type="match status" value="1"/>
</dbReference>
<dbReference type="SUPFAM" id="SSF52540">
    <property type="entry name" value="P-loop containing nucleoside triphosphate hydrolases"/>
    <property type="match status" value="2"/>
</dbReference>
<dbReference type="PROSITE" id="PS51903">
    <property type="entry name" value="CLP_R"/>
    <property type="match status" value="1"/>
</dbReference>
<dbReference type="PROSITE" id="PS00870">
    <property type="entry name" value="CLPAB_1"/>
    <property type="match status" value="1"/>
</dbReference>
<dbReference type="PROSITE" id="PS00871">
    <property type="entry name" value="CLPAB_2"/>
    <property type="match status" value="1"/>
</dbReference>
<keyword id="KW-0067">ATP-binding</keyword>
<keyword id="KW-0143">Chaperone</keyword>
<keyword id="KW-0175">Coiled coil</keyword>
<keyword id="KW-0963">Cytoplasm</keyword>
<keyword id="KW-0547">Nucleotide-binding</keyword>
<keyword id="KW-0677">Repeat</keyword>
<keyword id="KW-0346">Stress response</keyword>
<sequence>MDLNKFTEKAKSLIQSAQMKALGAGHQIFMPEHLLKVMLEDESGLVQDLINACGGNVQSISDAVDSAIKKLPVIEGPGSGGLQLSREIAKVFEDSIGIAKRNKDSFVAVERLLQGLTAQKDDTVGKILAENGVTPQKLNSVVAEMRKGSSADSPNSEEKLNAAKKYTKDVTELAMQGKLDPVIGRDEEIRRTMQVSLRRTKNNPVLIGEPGVGKTAIVEGLANRIVANDVPLGLHDAKVLALDLGALIAGTKFRGEFEERLKAVINELSRAEGKVILFIDELHTLVGAGATSGAMDASNLLKPALARGEVRCIGATTLDEYRQHIEKDPALARRFQPVFISQPTETDTISILRGLKERYEVHHGIRITDGAIIAAATLSNRYITDRFLPDKAIDLIDEAASRVRIEMDSKPEVIDELERKVIQLKIEAEALKKESDENSKQRLKKINEEIENLNSKFADLNSKWQMEKNKIARIQETAEKLDNARKELELVQRSGNLGRAGELMYGVIPQLENELKNQEKVTDSFLKKEVTGDDIANIVSKWTGIPVDNMMHSEKEKLLNMENEIGRRVIGQKDAIEAISNAVRRSRSGVQDTNKPFGSFLFLGPTGVGKTELAKALAEFLFDDQSALLRFDMSEYMEKHSVSKLIGAPPGYVGYEQGGRLTEAVRRRPYQVILFDEIEKANPDIFNLLLQILDEGRLTDSHGKLIDFRNTILILTSNLGAEIMLKGNVDSVRNEVMQIVKSAFRPEFLNRLDEIIIFHSLTRDDIYKIIDVQFSYLQKTLAKRKLSISLLQEAKELIAQTGYDPEYGARPLKRVIQECIQNNLAKLVLSGEVVENDELIVYALDNEILVKKV</sequence>
<proteinExistence type="inferred from homology"/>
<evidence type="ECO:0000250" key="1"/>
<evidence type="ECO:0000255" key="2">
    <source>
        <dbReference type="PROSITE-ProRule" id="PRU01251"/>
    </source>
</evidence>
<evidence type="ECO:0000305" key="3"/>
<reference key="1">
    <citation type="journal article" date="2004" name="PLoS Biol.">
        <title>Phylogenomics of the reproductive parasite Wolbachia pipientis wMel: a streamlined genome overrun by mobile genetic elements.</title>
        <authorList>
            <person name="Wu M."/>
            <person name="Sun L.V."/>
            <person name="Vamathevan J.J."/>
            <person name="Riegler M."/>
            <person name="DeBoy R.T."/>
            <person name="Brownlie J.C."/>
            <person name="McGraw E.A."/>
            <person name="Martin W."/>
            <person name="Esser C."/>
            <person name="Ahmadinejad N."/>
            <person name="Wiegand C."/>
            <person name="Madupu R."/>
            <person name="Beanan M.J."/>
            <person name="Brinkac L.M."/>
            <person name="Daugherty S.C."/>
            <person name="Durkin A.S."/>
            <person name="Kolonay J.F."/>
            <person name="Nelson W.C."/>
            <person name="Mohamoud Y."/>
            <person name="Lee P."/>
            <person name="Berry K.J."/>
            <person name="Young M.B."/>
            <person name="Utterback T.R."/>
            <person name="Weidman J.F."/>
            <person name="Nierman W.C."/>
            <person name="Paulsen I.T."/>
            <person name="Nelson K.E."/>
            <person name="Tettelin H."/>
            <person name="O'Neill S.L."/>
            <person name="Eisen J.A."/>
        </authorList>
    </citation>
    <scope>NUCLEOTIDE SEQUENCE [LARGE SCALE GENOMIC DNA]</scope>
</reference>
<name>CLPB_WOLPM</name>
<feature type="chain" id="PRO_0000191204" description="Chaperone protein ClpB">
    <location>
        <begin position="1"/>
        <end position="853"/>
    </location>
</feature>
<feature type="domain" description="Clp R" evidence="2">
    <location>
        <begin position="3"/>
        <end position="148"/>
    </location>
</feature>
<feature type="region of interest" description="Repeat 1" evidence="2">
    <location>
        <begin position="6"/>
        <end position="71"/>
    </location>
</feature>
<feature type="region of interest" description="Repeat 2" evidence="2">
    <location>
        <begin position="84"/>
        <end position="148"/>
    </location>
</feature>
<feature type="region of interest" description="NBD1" evidence="1">
    <location>
        <begin position="161"/>
        <end position="342"/>
    </location>
</feature>
<feature type="region of interest" description="Linker" evidence="1">
    <location>
        <begin position="343"/>
        <end position="544"/>
    </location>
</feature>
<feature type="region of interest" description="NBD2" evidence="1">
    <location>
        <begin position="554"/>
        <end position="760"/>
    </location>
</feature>
<feature type="region of interest" description="C-terminal" evidence="1">
    <location>
        <begin position="761"/>
        <end position="853"/>
    </location>
</feature>
<feature type="coiled-coil region" evidence="1">
    <location>
        <begin position="393"/>
        <end position="524"/>
    </location>
</feature>
<feature type="binding site" evidence="1">
    <location>
        <begin position="208"/>
        <end position="215"/>
    </location>
    <ligand>
        <name>ATP</name>
        <dbReference type="ChEBI" id="CHEBI:30616"/>
        <label>1</label>
    </ligand>
</feature>
<feature type="binding site" evidence="1">
    <location>
        <begin position="604"/>
        <end position="611"/>
    </location>
    <ligand>
        <name>ATP</name>
        <dbReference type="ChEBI" id="CHEBI:30616"/>
        <label>2</label>
    </ligand>
</feature>
<comment type="function">
    <text evidence="1">Part of a stress-induced multi-chaperone system, it is involved in the recovery of the cell from heat-induced damage, in cooperation with DnaK, DnaJ and GrpE. Acts before DnaK, in the processing of protein aggregates. Protein binding stimulates the ATPase activity; ATP hydrolysis unfolds the denatured protein aggregates, which probably helps expose new hydrophobic binding sites on the surface of ClpB-bound aggregates, contributing to the solubilization and refolding of denatured protein aggregates by DnaK (By similarity).</text>
</comment>
<comment type="subunit">
    <text evidence="1">Homohexamer. The oligomerization is ATP-dependent (By similarity).</text>
</comment>
<comment type="subcellular location">
    <subcellularLocation>
        <location evidence="3">Cytoplasm</location>
    </subcellularLocation>
</comment>
<comment type="domain">
    <text evidence="1">The Clp repeat (R) domain probably functions as a substrate-discriminating domain, recruiting aggregated proteins to the ClpB hexamer and/or stabilizing bound proteins. The NBD2 domain is responsible for oligomerization, whereas the NBD1 domain stabilizes the hexamer probably in an ATP-dependent manner. The movement of the coiled-coil domain is essential for ClpB ability to rescue proteins from an aggregated state, probably by pulling apart large aggregated proteins, which are bound between the coiled-coils motifs of adjacent ClpB subunits in the functional hexamer (By similarity).</text>
</comment>
<comment type="similarity">
    <text evidence="3">Belongs to the ClpA/ClpB family.</text>
</comment>
<accession>Q73IE4</accession>
<organism>
    <name type="scientific">Wolbachia pipientis wMel</name>
    <dbReference type="NCBI Taxonomy" id="163164"/>
    <lineage>
        <taxon>Bacteria</taxon>
        <taxon>Pseudomonadati</taxon>
        <taxon>Pseudomonadota</taxon>
        <taxon>Alphaproteobacteria</taxon>
        <taxon>Rickettsiales</taxon>
        <taxon>Anaplasmataceae</taxon>
        <taxon>Wolbachieae</taxon>
        <taxon>Wolbachia</taxon>
    </lineage>
</organism>
<protein>
    <recommendedName>
        <fullName>Chaperone protein ClpB</fullName>
    </recommendedName>
</protein>